<dbReference type="EMBL" id="AK095759">
    <property type="protein sequence ID" value="BAG53124.1"/>
    <property type="molecule type" value="mRNA"/>
</dbReference>
<dbReference type="EMBL" id="CH471106">
    <property type="protein sequence ID" value="EAW84039.1"/>
    <property type="molecule type" value="Genomic_DNA"/>
</dbReference>
<dbReference type="EMBL" id="BC001791">
    <property type="protein sequence ID" value="AAH01791.1"/>
    <property type="molecule type" value="mRNA"/>
</dbReference>
<dbReference type="CCDS" id="CCDS12215.1"/>
<dbReference type="RefSeq" id="NP_001304984.1">
    <property type="nucleotide sequence ID" value="NM_001318055.1"/>
</dbReference>
<dbReference type="RefSeq" id="NP_001304985.1">
    <property type="nucleotide sequence ID" value="NM_001318056.1"/>
</dbReference>
<dbReference type="RefSeq" id="NP_077011.1">
    <property type="nucleotide sequence ID" value="NM_024106.3"/>
</dbReference>
<dbReference type="SMR" id="Q9BUY5"/>
<dbReference type="BioGRID" id="122536">
    <property type="interactions" value="80"/>
</dbReference>
<dbReference type="FunCoup" id="Q9BUY5">
    <property type="interactions" value="29"/>
</dbReference>
<dbReference type="IntAct" id="Q9BUY5">
    <property type="interactions" value="55"/>
</dbReference>
<dbReference type="STRING" id="9606.ENSP00000253115"/>
<dbReference type="iPTMnet" id="Q9BUY5"/>
<dbReference type="PhosphoSitePlus" id="Q9BUY5"/>
<dbReference type="SwissPalm" id="Q9BUY5"/>
<dbReference type="BioMuta" id="ZNF426"/>
<dbReference type="DMDM" id="34925651"/>
<dbReference type="jPOST" id="Q9BUY5"/>
<dbReference type="MassIVE" id="Q9BUY5"/>
<dbReference type="PaxDb" id="9606-ENSP00000439017"/>
<dbReference type="PeptideAtlas" id="Q9BUY5"/>
<dbReference type="ProteomicsDB" id="79143"/>
<dbReference type="Antibodypedia" id="12609">
    <property type="antibodies" value="130 antibodies from 24 providers"/>
</dbReference>
<dbReference type="DNASU" id="79088"/>
<dbReference type="Ensembl" id="ENST00000253115.7">
    <property type="protein sequence ID" value="ENSP00000253115.1"/>
    <property type="gene ID" value="ENSG00000130818.12"/>
</dbReference>
<dbReference type="Ensembl" id="ENST00000535489.5">
    <property type="protein sequence ID" value="ENSP00000439017.1"/>
    <property type="gene ID" value="ENSG00000130818.12"/>
</dbReference>
<dbReference type="GeneID" id="79088"/>
<dbReference type="KEGG" id="hsa:79088"/>
<dbReference type="MANE-Select" id="ENST00000253115.7">
    <property type="protein sequence ID" value="ENSP00000253115.1"/>
    <property type="RefSeq nucleotide sequence ID" value="NM_024106.3"/>
    <property type="RefSeq protein sequence ID" value="NP_077011.1"/>
</dbReference>
<dbReference type="UCSC" id="uc002mlq.4">
    <property type="organism name" value="human"/>
</dbReference>
<dbReference type="AGR" id="HGNC:20725"/>
<dbReference type="CTD" id="79088"/>
<dbReference type="DisGeNET" id="79088"/>
<dbReference type="GeneCards" id="ZNF426"/>
<dbReference type="HGNC" id="HGNC:20725">
    <property type="gene designation" value="ZNF426"/>
</dbReference>
<dbReference type="HPA" id="ENSG00000130818">
    <property type="expression patterns" value="Low tissue specificity"/>
</dbReference>
<dbReference type="neXtProt" id="NX_Q9BUY5"/>
<dbReference type="OpenTargets" id="ENSG00000130818"/>
<dbReference type="PharmGKB" id="PA134991761"/>
<dbReference type="VEuPathDB" id="HostDB:ENSG00000130818"/>
<dbReference type="eggNOG" id="KOG1721">
    <property type="taxonomic scope" value="Eukaryota"/>
</dbReference>
<dbReference type="GeneTree" id="ENSGT00940000163292"/>
<dbReference type="HOGENOM" id="CLU_002678_44_3_1"/>
<dbReference type="InParanoid" id="Q9BUY5"/>
<dbReference type="OMA" id="MFNHWGK"/>
<dbReference type="OrthoDB" id="3437960at2759"/>
<dbReference type="PAN-GO" id="Q9BUY5">
    <property type="GO annotations" value="4 GO annotations based on evolutionary models"/>
</dbReference>
<dbReference type="PhylomeDB" id="Q9BUY5"/>
<dbReference type="TreeFam" id="TF342172"/>
<dbReference type="PathwayCommons" id="Q9BUY5"/>
<dbReference type="Reactome" id="R-HSA-212436">
    <property type="pathway name" value="Generic Transcription Pathway"/>
</dbReference>
<dbReference type="SignaLink" id="Q9BUY5"/>
<dbReference type="BioGRID-ORCS" id="79088">
    <property type="hits" value="8 hits in 1175 CRISPR screens"/>
</dbReference>
<dbReference type="ChiTaRS" id="ZNF426">
    <property type="organism name" value="human"/>
</dbReference>
<dbReference type="GenomeRNAi" id="79088"/>
<dbReference type="Pharos" id="Q9BUY5">
    <property type="development level" value="Tbio"/>
</dbReference>
<dbReference type="PRO" id="PR:Q9BUY5"/>
<dbReference type="Proteomes" id="UP000005640">
    <property type="component" value="Chromosome 19"/>
</dbReference>
<dbReference type="RNAct" id="Q9BUY5">
    <property type="molecule type" value="protein"/>
</dbReference>
<dbReference type="Bgee" id="ENSG00000130818">
    <property type="expression patterns" value="Expressed in oocyte and 195 other cell types or tissues"/>
</dbReference>
<dbReference type="ExpressionAtlas" id="Q9BUY5">
    <property type="expression patterns" value="baseline and differential"/>
</dbReference>
<dbReference type="GO" id="GO:0005634">
    <property type="term" value="C:nucleus"/>
    <property type="evidence" value="ECO:0000318"/>
    <property type="project" value="GO_Central"/>
</dbReference>
<dbReference type="GO" id="GO:0000981">
    <property type="term" value="F:DNA-binding transcription factor activity, RNA polymerase II-specific"/>
    <property type="evidence" value="ECO:0000318"/>
    <property type="project" value="GO_Central"/>
</dbReference>
<dbReference type="GO" id="GO:0000978">
    <property type="term" value="F:RNA polymerase II cis-regulatory region sequence-specific DNA binding"/>
    <property type="evidence" value="ECO:0000318"/>
    <property type="project" value="GO_Central"/>
</dbReference>
<dbReference type="GO" id="GO:0008270">
    <property type="term" value="F:zinc ion binding"/>
    <property type="evidence" value="ECO:0007669"/>
    <property type="project" value="UniProtKB-KW"/>
</dbReference>
<dbReference type="GO" id="GO:0006357">
    <property type="term" value="P:regulation of transcription by RNA polymerase II"/>
    <property type="evidence" value="ECO:0000318"/>
    <property type="project" value="GO_Central"/>
</dbReference>
<dbReference type="CDD" id="cd07765">
    <property type="entry name" value="KRAB_A-box"/>
    <property type="match status" value="1"/>
</dbReference>
<dbReference type="FunFam" id="3.30.160.60:FF:000029">
    <property type="entry name" value="GLI family zinc finger 4"/>
    <property type="match status" value="1"/>
</dbReference>
<dbReference type="FunFam" id="3.30.160.60:FF:000184">
    <property type="entry name" value="Zinc finger protein 333"/>
    <property type="match status" value="2"/>
</dbReference>
<dbReference type="FunFam" id="3.30.160.60:FF:000338">
    <property type="entry name" value="zinc finger protein 383"/>
    <property type="match status" value="1"/>
</dbReference>
<dbReference type="FunFam" id="3.30.160.60:FF:000022">
    <property type="entry name" value="zinc finger protein 383 isoform X1"/>
    <property type="match status" value="1"/>
</dbReference>
<dbReference type="FunFam" id="3.30.160.60:FF:001498">
    <property type="entry name" value="Zinc finger protein 404"/>
    <property type="match status" value="1"/>
</dbReference>
<dbReference type="FunFam" id="3.30.160.60:FF:001004">
    <property type="entry name" value="Zinc finger protein 426"/>
    <property type="match status" value="1"/>
</dbReference>
<dbReference type="FunFam" id="3.30.160.60:FF:002676">
    <property type="entry name" value="Zinc finger protein 426"/>
    <property type="match status" value="1"/>
</dbReference>
<dbReference type="FunFam" id="3.30.160.60:FF:002254">
    <property type="entry name" value="Zinc finger protein 540"/>
    <property type="match status" value="1"/>
</dbReference>
<dbReference type="FunFam" id="3.30.160.60:FF:000371">
    <property type="entry name" value="Zinc finger protein 555"/>
    <property type="match status" value="2"/>
</dbReference>
<dbReference type="Gene3D" id="6.10.140.140">
    <property type="match status" value="1"/>
</dbReference>
<dbReference type="Gene3D" id="3.30.160.60">
    <property type="entry name" value="Classic Zinc Finger"/>
    <property type="match status" value="12"/>
</dbReference>
<dbReference type="InterPro" id="IPR001909">
    <property type="entry name" value="KRAB"/>
</dbReference>
<dbReference type="InterPro" id="IPR036051">
    <property type="entry name" value="KRAB_dom_sf"/>
</dbReference>
<dbReference type="InterPro" id="IPR036236">
    <property type="entry name" value="Znf_C2H2_sf"/>
</dbReference>
<dbReference type="InterPro" id="IPR013087">
    <property type="entry name" value="Znf_C2H2_type"/>
</dbReference>
<dbReference type="PANTHER" id="PTHR23226">
    <property type="entry name" value="ZINC FINGER AND SCAN DOMAIN-CONTAINING"/>
    <property type="match status" value="1"/>
</dbReference>
<dbReference type="PANTHER" id="PTHR23226:SF430">
    <property type="entry name" value="ZINC FINGER PROTEIN 709-LIKE"/>
    <property type="match status" value="1"/>
</dbReference>
<dbReference type="Pfam" id="PF01352">
    <property type="entry name" value="KRAB"/>
    <property type="match status" value="1"/>
</dbReference>
<dbReference type="Pfam" id="PF00096">
    <property type="entry name" value="zf-C2H2"/>
    <property type="match status" value="9"/>
</dbReference>
<dbReference type="Pfam" id="PF13465">
    <property type="entry name" value="zf-H2C2_2"/>
    <property type="match status" value="1"/>
</dbReference>
<dbReference type="SMART" id="SM00349">
    <property type="entry name" value="KRAB"/>
    <property type="match status" value="1"/>
</dbReference>
<dbReference type="SMART" id="SM00614">
    <property type="entry name" value="ZnF_BED"/>
    <property type="match status" value="1"/>
</dbReference>
<dbReference type="SMART" id="SM00355">
    <property type="entry name" value="ZnF_C2H2"/>
    <property type="match status" value="12"/>
</dbReference>
<dbReference type="SUPFAM" id="SSF57667">
    <property type="entry name" value="beta-beta-alpha zinc fingers"/>
    <property type="match status" value="7"/>
</dbReference>
<dbReference type="SUPFAM" id="SSF109640">
    <property type="entry name" value="KRAB domain (Kruppel-associated box)"/>
    <property type="match status" value="1"/>
</dbReference>
<dbReference type="PROSITE" id="PS50805">
    <property type="entry name" value="KRAB"/>
    <property type="match status" value="1"/>
</dbReference>
<dbReference type="PROSITE" id="PS00028">
    <property type="entry name" value="ZINC_FINGER_C2H2_1"/>
    <property type="match status" value="11"/>
</dbReference>
<dbReference type="PROSITE" id="PS50157">
    <property type="entry name" value="ZINC_FINGER_C2H2_2"/>
    <property type="match status" value="12"/>
</dbReference>
<proteinExistence type="evidence at protein level"/>
<comment type="function">
    <text>May be involved in transcriptional regulation.</text>
</comment>
<comment type="interaction">
    <interactant intactId="EBI-743265">
        <id>Q9BUY5</id>
    </interactant>
    <interactant intactId="EBI-2880652">
        <id>Q08043</id>
        <label>ACTN3</label>
    </interactant>
    <organismsDiffer>false</organismsDiffer>
    <experiments>3</experiments>
</comment>
<comment type="interaction">
    <interactant intactId="EBI-743265">
        <id>Q9BUY5</id>
    </interactant>
    <interactant intactId="EBI-17183751">
        <id>X5D778</id>
        <label>ANKRD11</label>
    </interactant>
    <organismsDiffer>false</organismsDiffer>
    <experiments>3</experiments>
</comment>
<comment type="interaction">
    <interactant intactId="EBI-743265">
        <id>Q9BUY5</id>
    </interactant>
    <interactant intactId="EBI-742909">
        <id>Q9H6L4</id>
        <label>ARMC7</label>
    </interactant>
    <organismsDiffer>false</organismsDiffer>
    <experiments>3</experiments>
</comment>
<comment type="interaction">
    <interactant intactId="EBI-743265">
        <id>Q9BUY5</id>
    </interactant>
    <interactant intactId="EBI-1166928">
        <id>Q8N5M1</id>
        <label>ATPAF2</label>
    </interactant>
    <organismsDiffer>false</organismsDiffer>
    <experiments>3</experiments>
</comment>
<comment type="interaction">
    <interactant intactId="EBI-743265">
        <id>Q9BUY5</id>
    </interactant>
    <interactant intactId="EBI-358049">
        <id>Q13895</id>
        <label>BYSL</label>
    </interactant>
    <organismsDiffer>false</organismsDiffer>
    <experiments>3</experiments>
</comment>
<comment type="interaction">
    <interactant intactId="EBI-743265">
        <id>Q9BUY5</id>
    </interactant>
    <interactant intactId="EBI-11530605">
        <id>Q9H257-2</id>
        <label>CARD9</label>
    </interactant>
    <organismsDiffer>false</organismsDiffer>
    <experiments>3</experiments>
</comment>
<comment type="interaction">
    <interactant intactId="EBI-743265">
        <id>Q9BUY5</id>
    </interactant>
    <interactant intactId="EBI-395261">
        <id>P24863</id>
        <label>CCNC</label>
    </interactant>
    <organismsDiffer>false</organismsDiffer>
    <experiments>3</experiments>
</comment>
<comment type="interaction">
    <interactant intactId="EBI-743265">
        <id>Q9BUY5</id>
    </interactant>
    <interactant intactId="EBI-746238">
        <id>Q07002</id>
        <label>CDK18</label>
    </interactant>
    <organismsDiffer>false</organismsDiffer>
    <experiments>3</experiments>
</comment>
<comment type="interaction">
    <interactant intactId="EBI-743265">
        <id>Q9BUY5</id>
    </interactant>
    <interactant intactId="EBI-10292696">
        <id>Q96Q77</id>
        <label>CIB3</label>
    </interactant>
    <organismsDiffer>false</organismsDiffer>
    <experiments>3</experiments>
</comment>
<comment type="interaction">
    <interactant intactId="EBI-743265">
        <id>Q9BUY5</id>
    </interactant>
    <interactant intactId="EBI-11962928">
        <id>Q9UI47-2</id>
        <label>CTNNA3</label>
    </interactant>
    <organismsDiffer>false</organismsDiffer>
    <experiments>3</experiments>
</comment>
<comment type="interaction">
    <interactant intactId="EBI-743265">
        <id>Q9BUY5</id>
    </interactant>
    <interactant intactId="EBI-6591081">
        <id>Q13115</id>
        <label>DUSP4</label>
    </interactant>
    <organismsDiffer>false</organismsDiffer>
    <experiments>3</experiments>
</comment>
<comment type="interaction">
    <interactant intactId="EBI-743265">
        <id>Q9BUY5</id>
    </interactant>
    <interactant intactId="EBI-744099">
        <id>Q9H0I2</id>
        <label>ENKD1</label>
    </interactant>
    <organismsDiffer>false</organismsDiffer>
    <experiments>3</experiments>
</comment>
<comment type="interaction">
    <interactant intactId="EBI-743265">
        <id>Q9BUY5</id>
    </interactant>
    <interactant intactId="EBI-719941">
        <id>Q3B820</id>
        <label>FAM161A</label>
    </interactant>
    <organismsDiffer>false</organismsDiffer>
    <experiments>3</experiments>
</comment>
<comment type="interaction">
    <interactant intactId="EBI-743265">
        <id>Q9BUY5</id>
    </interactant>
    <interactant intactId="EBI-374781">
        <id>O76003</id>
        <label>GLRX3</label>
    </interactant>
    <organismsDiffer>false</organismsDiffer>
    <experiments>3</experiments>
</comment>
<comment type="interaction">
    <interactant intactId="EBI-743265">
        <id>Q9BUY5</id>
    </interactant>
    <interactant intactId="EBI-2798865">
        <id>P57764</id>
        <label>GSDMD</label>
    </interactant>
    <organismsDiffer>false</organismsDiffer>
    <experiments>3</experiments>
</comment>
<comment type="interaction">
    <interactant intactId="EBI-743265">
        <id>Q9BUY5</id>
    </interactant>
    <interactant intactId="EBI-5460660">
        <id>Q96MH2</id>
        <label>HEXIM2</label>
    </interactant>
    <organismsDiffer>false</organismsDiffer>
    <experiments>5</experiments>
</comment>
<comment type="interaction">
    <interactant intactId="EBI-743265">
        <id>Q9BUY5</id>
    </interactant>
    <interactant intactId="EBI-4397613">
        <id>Q7L273</id>
        <label>KCTD9</label>
    </interactant>
    <organismsDiffer>false</organismsDiffer>
    <experiments>3</experiments>
</comment>
<comment type="interaction">
    <interactant intactId="EBI-743265">
        <id>Q9BUY5</id>
    </interactant>
    <interactant intactId="EBI-2430095">
        <id>P12035</id>
        <label>KRT3</label>
    </interactant>
    <organismsDiffer>false</organismsDiffer>
    <experiments>3</experiments>
</comment>
<comment type="interaction">
    <interactant intactId="EBI-743265">
        <id>Q9BUY5</id>
    </interactant>
    <interactant intactId="EBI-739832">
        <id>Q8TBB1</id>
        <label>LNX1</label>
    </interactant>
    <organismsDiffer>false</organismsDiffer>
    <experiments>3</experiments>
</comment>
<comment type="interaction">
    <interactant intactId="EBI-743265">
        <id>Q9BUY5</id>
    </interactant>
    <interactant intactId="EBI-2341787">
        <id>Q17RB8</id>
        <label>LONRF1</label>
    </interactant>
    <organismsDiffer>false</organismsDiffer>
    <experiments>3</experiments>
</comment>
<comment type="interaction">
    <interactant intactId="EBI-743265">
        <id>Q9BUY5</id>
    </interactant>
    <interactant intactId="EBI-741037">
        <id>Q9BRK4</id>
        <label>LZTS2</label>
    </interactant>
    <organismsDiffer>false</organismsDiffer>
    <experiments>3</experiments>
</comment>
<comment type="interaction">
    <interactant intactId="EBI-743265">
        <id>Q9BUY5</id>
    </interactant>
    <interactant intactId="EBI-746778">
        <id>Q96A72</id>
        <label>MAGOHB</label>
    </interactant>
    <organismsDiffer>false</organismsDiffer>
    <experiments>4</experiments>
</comment>
<comment type="interaction">
    <interactant intactId="EBI-743265">
        <id>Q9BUY5</id>
    </interactant>
    <interactant intactId="EBI-2339737">
        <id>Q96EH3</id>
        <label>MALSU1</label>
    </interactant>
    <organismsDiffer>false</organismsDiffer>
    <experiments>3</experiments>
</comment>
<comment type="interaction">
    <interactant intactId="EBI-743265">
        <id>Q9BUY5</id>
    </interactant>
    <interactant intactId="EBI-307294">
        <id>Q13163</id>
        <label>MAP2K5</label>
    </interactant>
    <organismsDiffer>false</organismsDiffer>
    <experiments>3</experiments>
</comment>
<comment type="interaction">
    <interactant intactId="EBI-743265">
        <id>Q9BUY5</id>
    </interactant>
    <interactant intactId="EBI-10242229">
        <id>Q53F39</id>
        <label>MPPE1</label>
    </interactant>
    <organismsDiffer>false</organismsDiffer>
    <experiments>3</experiments>
</comment>
<comment type="interaction">
    <interactant intactId="EBI-743265">
        <id>Q9BUY5</id>
    </interactant>
    <interactant intactId="EBI-742948">
        <id>Q5JR59</id>
        <label>MTUS2</label>
    </interactant>
    <organismsDiffer>false</organismsDiffer>
    <experiments>3</experiments>
</comment>
<comment type="interaction">
    <interactant intactId="EBI-743265">
        <id>Q9BUY5</id>
    </interactant>
    <interactant intactId="EBI-8656665">
        <id>Q8N6N6</id>
        <label>NATD1</label>
    </interactant>
    <organismsDiffer>false</organismsDiffer>
    <experiments>3</experiments>
</comment>
<comment type="interaction">
    <interactant intactId="EBI-743265">
        <id>Q9BUY5</id>
    </interactant>
    <interactant intactId="EBI-748974">
        <id>Q96CV9</id>
        <label>OPTN</label>
    </interactant>
    <organismsDiffer>false</organismsDiffer>
    <experiments>4</experiments>
</comment>
<comment type="interaction">
    <interactant intactId="EBI-743265">
        <id>Q9BUY5</id>
    </interactant>
    <interactant intactId="EBI-3921217">
        <id>Q9HBI0</id>
        <label>PARVG</label>
    </interactant>
    <organismsDiffer>false</organismsDiffer>
    <experiments>3</experiments>
</comment>
<comment type="interaction">
    <interactant intactId="EBI-743265">
        <id>Q9BUY5</id>
    </interactant>
    <interactant intactId="EBI-712376">
        <id>P40937</id>
        <label>RFC5</label>
    </interactant>
    <organismsDiffer>false</organismsDiffer>
    <experiments>3</experiments>
</comment>
<comment type="interaction">
    <interactant intactId="EBI-743265">
        <id>Q9BUY5</id>
    </interactant>
    <interactant intactId="EBI-6285694">
        <id>Q9H4E5</id>
        <label>RHOJ</label>
    </interactant>
    <organismsDiffer>false</organismsDiffer>
    <experiments>3</experiments>
</comment>
<comment type="interaction">
    <interactant intactId="EBI-743265">
        <id>Q9BUY5</id>
    </interactant>
    <interactant intactId="EBI-750487">
        <id>Q8WW24</id>
        <label>TEKT4</label>
    </interactant>
    <organismsDiffer>false</organismsDiffer>
    <experiments>3</experiments>
</comment>
<comment type="interaction">
    <interactant intactId="EBI-743265">
        <id>Q9BUY5</id>
    </interactant>
    <interactant intactId="EBI-744794">
        <id>Q9BZW7</id>
        <label>TSGA10</label>
    </interactant>
    <organismsDiffer>false</organismsDiffer>
    <experiments>3</experiments>
</comment>
<comment type="interaction">
    <interactant intactId="EBI-743265">
        <id>Q9BUY5</id>
    </interactant>
    <interactant intactId="EBI-2513462">
        <id>Q9UHP3</id>
        <label>USP25</label>
    </interactant>
    <organismsDiffer>false</organismsDiffer>
    <experiments>3</experiments>
</comment>
<comment type="interaction">
    <interactant intactId="EBI-743265">
        <id>Q9BUY5</id>
    </interactant>
    <interactant intactId="EBI-10183064">
        <id>Q8N5A5-2</id>
        <label>ZGPAT</label>
    </interactant>
    <organismsDiffer>false</organismsDiffer>
    <experiments>3</experiments>
</comment>
<comment type="interaction">
    <interactant intactId="EBI-743265">
        <id>Q9BUY5</id>
    </interactant>
    <interactant intactId="EBI-373456">
        <id>Q9Y3S2</id>
        <label>ZNF330</label>
    </interactant>
    <organismsDiffer>false</organismsDiffer>
    <experiments>3</experiments>
</comment>
<comment type="interaction">
    <interactant intactId="EBI-743265">
        <id>Q9BUY5</id>
    </interactant>
    <interactant intactId="EBI-5667532">
        <id>Q3MJ62</id>
        <label>ZSCAN23</label>
    </interactant>
    <organismsDiffer>false</organismsDiffer>
    <experiments>3</experiments>
</comment>
<comment type="subcellular location">
    <subcellularLocation>
        <location evidence="3">Nucleus</location>
    </subcellularLocation>
</comment>
<evidence type="ECO:0000255" key="1">
    <source>
        <dbReference type="PROSITE-ProRule" id="PRU00042"/>
    </source>
</evidence>
<evidence type="ECO:0000255" key="2">
    <source>
        <dbReference type="PROSITE-ProRule" id="PRU00119"/>
    </source>
</evidence>
<evidence type="ECO:0000305" key="3"/>
<name>ZN426_HUMAN</name>
<feature type="chain" id="PRO_0000047576" description="Zinc finger protein 426">
    <location>
        <begin position="1"/>
        <end position="554"/>
    </location>
</feature>
<feature type="domain" description="KRAB" evidence="2">
    <location>
        <begin position="42"/>
        <end position="112"/>
    </location>
</feature>
<feature type="zinc finger region" description="C2H2-type 1; atypical" evidence="1">
    <location>
        <begin position="146"/>
        <end position="174"/>
    </location>
</feature>
<feature type="zinc finger region" description="C2H2-type 2" evidence="1">
    <location>
        <begin position="224"/>
        <end position="246"/>
    </location>
</feature>
<feature type="zinc finger region" description="C2H2-type 3" evidence="1">
    <location>
        <begin position="280"/>
        <end position="302"/>
    </location>
</feature>
<feature type="zinc finger region" description="C2H2-type 4" evidence="1">
    <location>
        <begin position="308"/>
        <end position="330"/>
    </location>
</feature>
<feature type="zinc finger region" description="C2H2-type 5" evidence="1">
    <location>
        <begin position="336"/>
        <end position="358"/>
    </location>
</feature>
<feature type="zinc finger region" description="C2H2-type 6" evidence="1">
    <location>
        <begin position="364"/>
        <end position="386"/>
    </location>
</feature>
<feature type="zinc finger region" description="C2H2-type 7" evidence="1">
    <location>
        <begin position="392"/>
        <end position="414"/>
    </location>
</feature>
<feature type="zinc finger region" description="C2H2-type 8" evidence="1">
    <location>
        <begin position="420"/>
        <end position="442"/>
    </location>
</feature>
<feature type="zinc finger region" description="C2H2-type 9" evidence="1">
    <location>
        <begin position="448"/>
        <end position="470"/>
    </location>
</feature>
<feature type="zinc finger region" description="C2H2-type 10" evidence="1">
    <location>
        <begin position="476"/>
        <end position="498"/>
    </location>
</feature>
<feature type="zinc finger region" description="C2H2-type 11" evidence="1">
    <location>
        <begin position="504"/>
        <end position="526"/>
    </location>
</feature>
<feature type="zinc finger region" description="C2H2-type 12" evidence="1">
    <location>
        <begin position="532"/>
        <end position="554"/>
    </location>
</feature>
<feature type="sequence variant" id="VAR_024214" description="In dbSNP:rs2042200.">
    <original>A</original>
    <variation>V</variation>
    <location>
        <position position="4"/>
    </location>
</feature>
<feature type="sequence variant" id="VAR_052824" description="In dbSNP:rs10420644.">
    <original>T</original>
    <variation>A</variation>
    <location>
        <position position="219"/>
    </location>
</feature>
<protein>
    <recommendedName>
        <fullName>Zinc finger protein 426</fullName>
    </recommendedName>
</protein>
<keyword id="KW-0238">DNA-binding</keyword>
<keyword id="KW-0479">Metal-binding</keyword>
<keyword id="KW-0539">Nucleus</keyword>
<keyword id="KW-1267">Proteomics identification</keyword>
<keyword id="KW-1185">Reference proteome</keyword>
<keyword id="KW-0677">Repeat</keyword>
<keyword id="KW-0804">Transcription</keyword>
<keyword id="KW-0805">Transcription regulation</keyword>
<keyword id="KW-0862">Zinc</keyword>
<keyword id="KW-0863">Zinc-finger</keyword>
<accession>Q9BUY5</accession>
<accession>B3KTL2</accession>
<gene>
    <name type="primary">ZNF426</name>
</gene>
<reference key="1">
    <citation type="journal article" date="2004" name="Nat. Genet.">
        <title>Complete sequencing and characterization of 21,243 full-length human cDNAs.</title>
        <authorList>
            <person name="Ota T."/>
            <person name="Suzuki Y."/>
            <person name="Nishikawa T."/>
            <person name="Otsuki T."/>
            <person name="Sugiyama T."/>
            <person name="Irie R."/>
            <person name="Wakamatsu A."/>
            <person name="Hayashi K."/>
            <person name="Sato H."/>
            <person name="Nagai K."/>
            <person name="Kimura K."/>
            <person name="Makita H."/>
            <person name="Sekine M."/>
            <person name="Obayashi M."/>
            <person name="Nishi T."/>
            <person name="Shibahara T."/>
            <person name="Tanaka T."/>
            <person name="Ishii S."/>
            <person name="Yamamoto J."/>
            <person name="Saito K."/>
            <person name="Kawai Y."/>
            <person name="Isono Y."/>
            <person name="Nakamura Y."/>
            <person name="Nagahari K."/>
            <person name="Murakami K."/>
            <person name="Yasuda T."/>
            <person name="Iwayanagi T."/>
            <person name="Wagatsuma M."/>
            <person name="Shiratori A."/>
            <person name="Sudo H."/>
            <person name="Hosoiri T."/>
            <person name="Kaku Y."/>
            <person name="Kodaira H."/>
            <person name="Kondo H."/>
            <person name="Sugawara M."/>
            <person name="Takahashi M."/>
            <person name="Kanda K."/>
            <person name="Yokoi T."/>
            <person name="Furuya T."/>
            <person name="Kikkawa E."/>
            <person name="Omura Y."/>
            <person name="Abe K."/>
            <person name="Kamihara K."/>
            <person name="Katsuta N."/>
            <person name="Sato K."/>
            <person name="Tanikawa M."/>
            <person name="Yamazaki M."/>
            <person name="Ninomiya K."/>
            <person name="Ishibashi T."/>
            <person name="Yamashita H."/>
            <person name="Murakawa K."/>
            <person name="Fujimori K."/>
            <person name="Tanai H."/>
            <person name="Kimata M."/>
            <person name="Watanabe M."/>
            <person name="Hiraoka S."/>
            <person name="Chiba Y."/>
            <person name="Ishida S."/>
            <person name="Ono Y."/>
            <person name="Takiguchi S."/>
            <person name="Watanabe S."/>
            <person name="Yosida M."/>
            <person name="Hotuta T."/>
            <person name="Kusano J."/>
            <person name="Kanehori K."/>
            <person name="Takahashi-Fujii A."/>
            <person name="Hara H."/>
            <person name="Tanase T.-O."/>
            <person name="Nomura Y."/>
            <person name="Togiya S."/>
            <person name="Komai F."/>
            <person name="Hara R."/>
            <person name="Takeuchi K."/>
            <person name="Arita M."/>
            <person name="Imose N."/>
            <person name="Musashino K."/>
            <person name="Yuuki H."/>
            <person name="Oshima A."/>
            <person name="Sasaki N."/>
            <person name="Aotsuka S."/>
            <person name="Yoshikawa Y."/>
            <person name="Matsunawa H."/>
            <person name="Ichihara T."/>
            <person name="Shiohata N."/>
            <person name="Sano S."/>
            <person name="Moriya S."/>
            <person name="Momiyama H."/>
            <person name="Satoh N."/>
            <person name="Takami S."/>
            <person name="Terashima Y."/>
            <person name="Suzuki O."/>
            <person name="Nakagawa S."/>
            <person name="Senoh A."/>
            <person name="Mizoguchi H."/>
            <person name="Goto Y."/>
            <person name="Shimizu F."/>
            <person name="Wakebe H."/>
            <person name="Hishigaki H."/>
            <person name="Watanabe T."/>
            <person name="Sugiyama A."/>
            <person name="Takemoto M."/>
            <person name="Kawakami B."/>
            <person name="Yamazaki M."/>
            <person name="Watanabe K."/>
            <person name="Kumagai A."/>
            <person name="Itakura S."/>
            <person name="Fukuzumi Y."/>
            <person name="Fujimori Y."/>
            <person name="Komiyama M."/>
            <person name="Tashiro H."/>
            <person name="Tanigami A."/>
            <person name="Fujiwara T."/>
            <person name="Ono T."/>
            <person name="Yamada K."/>
            <person name="Fujii Y."/>
            <person name="Ozaki K."/>
            <person name="Hirao M."/>
            <person name="Ohmori Y."/>
            <person name="Kawabata A."/>
            <person name="Hikiji T."/>
            <person name="Kobatake N."/>
            <person name="Inagaki H."/>
            <person name="Ikema Y."/>
            <person name="Okamoto S."/>
            <person name="Okitani R."/>
            <person name="Kawakami T."/>
            <person name="Noguchi S."/>
            <person name="Itoh T."/>
            <person name="Shigeta K."/>
            <person name="Senba T."/>
            <person name="Matsumura K."/>
            <person name="Nakajima Y."/>
            <person name="Mizuno T."/>
            <person name="Morinaga M."/>
            <person name="Sasaki M."/>
            <person name="Togashi T."/>
            <person name="Oyama M."/>
            <person name="Hata H."/>
            <person name="Watanabe M."/>
            <person name="Komatsu T."/>
            <person name="Mizushima-Sugano J."/>
            <person name="Satoh T."/>
            <person name="Shirai Y."/>
            <person name="Takahashi Y."/>
            <person name="Nakagawa K."/>
            <person name="Okumura K."/>
            <person name="Nagase T."/>
            <person name="Nomura N."/>
            <person name="Kikuchi H."/>
            <person name="Masuho Y."/>
            <person name="Yamashita R."/>
            <person name="Nakai K."/>
            <person name="Yada T."/>
            <person name="Nakamura Y."/>
            <person name="Ohara O."/>
            <person name="Isogai T."/>
            <person name="Sugano S."/>
        </authorList>
    </citation>
    <scope>NUCLEOTIDE SEQUENCE [LARGE SCALE MRNA]</scope>
    <source>
        <tissue>Brain</tissue>
    </source>
</reference>
<reference key="2">
    <citation type="submission" date="2005-07" db="EMBL/GenBank/DDBJ databases">
        <authorList>
            <person name="Mural R.J."/>
            <person name="Istrail S."/>
            <person name="Sutton G.G."/>
            <person name="Florea L."/>
            <person name="Halpern A.L."/>
            <person name="Mobarry C.M."/>
            <person name="Lippert R."/>
            <person name="Walenz B."/>
            <person name="Shatkay H."/>
            <person name="Dew I."/>
            <person name="Miller J.R."/>
            <person name="Flanigan M.J."/>
            <person name="Edwards N.J."/>
            <person name="Bolanos R."/>
            <person name="Fasulo D."/>
            <person name="Halldorsson B.V."/>
            <person name="Hannenhalli S."/>
            <person name="Turner R."/>
            <person name="Yooseph S."/>
            <person name="Lu F."/>
            <person name="Nusskern D.R."/>
            <person name="Shue B.C."/>
            <person name="Zheng X.H."/>
            <person name="Zhong F."/>
            <person name="Delcher A.L."/>
            <person name="Huson D.H."/>
            <person name="Kravitz S.A."/>
            <person name="Mouchard L."/>
            <person name="Reinert K."/>
            <person name="Remington K.A."/>
            <person name="Clark A.G."/>
            <person name="Waterman M.S."/>
            <person name="Eichler E.E."/>
            <person name="Adams M.D."/>
            <person name="Hunkapiller M.W."/>
            <person name="Myers E.W."/>
            <person name="Venter J.C."/>
        </authorList>
    </citation>
    <scope>NUCLEOTIDE SEQUENCE [LARGE SCALE GENOMIC DNA]</scope>
</reference>
<reference key="3">
    <citation type="journal article" date="2004" name="Genome Res.">
        <title>The status, quality, and expansion of the NIH full-length cDNA project: the Mammalian Gene Collection (MGC).</title>
        <authorList>
            <consortium name="The MGC Project Team"/>
        </authorList>
    </citation>
    <scope>NUCLEOTIDE SEQUENCE [LARGE SCALE MRNA]</scope>
    <source>
        <tissue>Skin</tissue>
    </source>
</reference>
<organism>
    <name type="scientific">Homo sapiens</name>
    <name type="common">Human</name>
    <dbReference type="NCBI Taxonomy" id="9606"/>
    <lineage>
        <taxon>Eukaryota</taxon>
        <taxon>Metazoa</taxon>
        <taxon>Chordata</taxon>
        <taxon>Craniata</taxon>
        <taxon>Vertebrata</taxon>
        <taxon>Euteleostomi</taxon>
        <taxon>Mammalia</taxon>
        <taxon>Eutheria</taxon>
        <taxon>Euarchontoglires</taxon>
        <taxon>Primates</taxon>
        <taxon>Haplorrhini</taxon>
        <taxon>Catarrhini</taxon>
        <taxon>Hominidae</taxon>
        <taxon>Homo</taxon>
    </lineage>
</organism>
<sequence length="554" mass="63106">MAAADLSHGHYLSGDPVCLHEEKTPAGRIVADCLTDCYQDSVTFDDVAVDFTQEEWTLLDSTQRSLYSDVMLENYKNLATVGGQIIKPSLISWLEQEESRTVQGGVLQGWEMRLETQWSILQQDFLRGQTSIGIQLEGKHNGRELCDCEQCGEVFSEHSCLKTHVRTQSTGNTHDCNQYGKDFLTLCEKTSTGEKLSEFNQSEKIFSLTPNIVYQRTSTQEKSFECSHCGKSFINESYLQAHMRTHNGEKLYEWRNYGPGFIDSTSLSVLIETLNAKKPYKCKECGKGYRYPAYLSIHMRTHTGEKPYECKECGKAFNYSNSFQIHGRTHTGEKPYVCKECGKAFTQYSGLSMHVRSHSGDKPYECKECGKSFLTSSRLIQHIRTHTGEKPFVCVECGKAFAVSSNLSGHLRTHTEEKACECKICGKVFGYPSCLNNHMRTHSAQKPYTCKECGKAFNYSTHLKIHMRIHTGEKPYECKQCGKAFSHSSSFQIHERTHTGEKPYECKECGKAFTCSSSFRIHEKTHTEEKPYKCQQCGKAYSHPRSLRRHEQIH</sequence>